<feature type="chain" id="PRO_0000203938" description="Tagatose 1,6-diphosphate aldolase 1">
    <location>
        <begin position="1"/>
        <end position="325"/>
    </location>
</feature>
<name>LACD1_ENTFA</name>
<gene>
    <name type="primary">lacD1</name>
    <name type="synonym">lacD-1</name>
    <name type="ordered locus">EF_0696</name>
</gene>
<accession>Q837X9</accession>
<protein>
    <recommendedName>
        <fullName>Tagatose 1,6-diphosphate aldolase 1</fullName>
        <ecNumber>4.1.2.40</ecNumber>
    </recommendedName>
    <alternativeName>
        <fullName>D-tagatose-1,6-bisphosphate aldolase 1</fullName>
    </alternativeName>
    <alternativeName>
        <fullName>Tagatose-bisphosphate aldolase 1</fullName>
    </alternativeName>
</protein>
<organism>
    <name type="scientific">Enterococcus faecalis (strain ATCC 700802 / V583)</name>
    <dbReference type="NCBI Taxonomy" id="226185"/>
    <lineage>
        <taxon>Bacteria</taxon>
        <taxon>Bacillati</taxon>
        <taxon>Bacillota</taxon>
        <taxon>Bacilli</taxon>
        <taxon>Lactobacillales</taxon>
        <taxon>Enterococcaceae</taxon>
        <taxon>Enterococcus</taxon>
    </lineage>
</organism>
<reference key="1">
    <citation type="journal article" date="2003" name="Science">
        <title>Role of mobile DNA in the evolution of vancomycin-resistant Enterococcus faecalis.</title>
        <authorList>
            <person name="Paulsen I.T."/>
            <person name="Banerjei L."/>
            <person name="Myers G.S.A."/>
            <person name="Nelson K.E."/>
            <person name="Seshadri R."/>
            <person name="Read T.D."/>
            <person name="Fouts D.E."/>
            <person name="Eisen J.A."/>
            <person name="Gill S.R."/>
            <person name="Heidelberg J.F."/>
            <person name="Tettelin H."/>
            <person name="Dodson R.J."/>
            <person name="Umayam L.A."/>
            <person name="Brinkac L.M."/>
            <person name="Beanan M.J."/>
            <person name="Daugherty S.C."/>
            <person name="DeBoy R.T."/>
            <person name="Durkin S.A."/>
            <person name="Kolonay J.F."/>
            <person name="Madupu R."/>
            <person name="Nelson W.C."/>
            <person name="Vamathevan J.J."/>
            <person name="Tran B."/>
            <person name="Upton J."/>
            <person name="Hansen T."/>
            <person name="Shetty J."/>
            <person name="Khouri H.M."/>
            <person name="Utterback T.R."/>
            <person name="Radune D."/>
            <person name="Ketchum K.A."/>
            <person name="Dougherty B.A."/>
            <person name="Fraser C.M."/>
        </authorList>
    </citation>
    <scope>NUCLEOTIDE SEQUENCE [LARGE SCALE GENOMIC DNA]</scope>
    <source>
        <strain>ATCC 700802 / V583</strain>
    </source>
</reference>
<evidence type="ECO:0000305" key="1"/>
<proteinExistence type="inferred from homology"/>
<comment type="catalytic activity">
    <reaction>
        <text>D-tagatofuranose 1,6-bisphosphate = D-glyceraldehyde 3-phosphate + dihydroxyacetone phosphate</text>
        <dbReference type="Rhea" id="RHEA:22948"/>
        <dbReference type="ChEBI" id="CHEBI:57642"/>
        <dbReference type="ChEBI" id="CHEBI:58694"/>
        <dbReference type="ChEBI" id="CHEBI:59776"/>
        <dbReference type="EC" id="4.1.2.40"/>
    </reaction>
</comment>
<comment type="pathway">
    <text>Carbohydrate metabolism; D-tagatose 6-phosphate degradation; D-glyceraldehyde 3-phosphate and glycerone phosphate from D-tagatose 6-phosphate: step 2/2.</text>
</comment>
<comment type="similarity">
    <text evidence="1">Belongs to the aldolase LacD family.</text>
</comment>
<sequence length="325" mass="36085">MKKISEQKRKHLENLVDDQGIIGALAIDQRGALKRMMGKYKEVTAQEISDFKVLVSRCLTPETSAILLDPEYGLAAAENRAQTSGLLLAYEKTGYDASTPGRLPDSLDVWSVKRLKEAGADACKFLLYYDVDESEAINERKKAYIERIGSECLAEEIPFFLEIVSYDANNSDSASKEYAKVKPHKVIEAMKEFSKDRYNVDVLKVEVPVNMNFVEGFGTESLYSQDEAQAFFNMQSEATQLPFIFLSAGVSATMFQETLKFAKKAGSSFNGVLCGRATWADGVLPFVQQGAEAAVAWLETTGKTNVEELNQVLRESAVSVFEKIQ</sequence>
<keyword id="KW-0423">Lactose metabolism</keyword>
<keyword id="KW-0456">Lyase</keyword>
<keyword id="KW-1185">Reference proteome</keyword>
<dbReference type="EC" id="4.1.2.40"/>
<dbReference type="EMBL" id="AE016830">
    <property type="protein sequence ID" value="AAO80517.1"/>
    <property type="molecule type" value="Genomic_DNA"/>
</dbReference>
<dbReference type="RefSeq" id="NP_814447.1">
    <property type="nucleotide sequence ID" value="NC_004668.1"/>
</dbReference>
<dbReference type="SMR" id="Q837X9"/>
<dbReference type="STRING" id="226185.EF_0696"/>
<dbReference type="EnsemblBacteria" id="AAO80517">
    <property type="protein sequence ID" value="AAO80517"/>
    <property type="gene ID" value="EF_0696"/>
</dbReference>
<dbReference type="KEGG" id="efa:EF0696"/>
<dbReference type="PATRIC" id="fig|226185.45.peg.2638"/>
<dbReference type="eggNOG" id="COG3684">
    <property type="taxonomic scope" value="Bacteria"/>
</dbReference>
<dbReference type="HOGENOM" id="CLU_058971_0_1_9"/>
<dbReference type="UniPathway" id="UPA00704">
    <property type="reaction ID" value="UER00716"/>
</dbReference>
<dbReference type="Proteomes" id="UP000001415">
    <property type="component" value="Chromosome"/>
</dbReference>
<dbReference type="GO" id="GO:0061595">
    <property type="term" value="F:6-deoxy-6-sulfofructose-1-phosphate aldolase activity"/>
    <property type="evidence" value="ECO:0007669"/>
    <property type="project" value="TreeGrafter"/>
</dbReference>
<dbReference type="GO" id="GO:0009024">
    <property type="term" value="F:tagatose-6-phosphate kinase activity"/>
    <property type="evidence" value="ECO:0007669"/>
    <property type="project" value="InterPro"/>
</dbReference>
<dbReference type="GO" id="GO:0009025">
    <property type="term" value="F:tagatose-bisphosphate aldolase activity"/>
    <property type="evidence" value="ECO:0007669"/>
    <property type="project" value="UniProtKB-UniRule"/>
</dbReference>
<dbReference type="GO" id="GO:1902777">
    <property type="term" value="P:6-sulfoquinovose(1-) catabolic process"/>
    <property type="evidence" value="ECO:0007669"/>
    <property type="project" value="TreeGrafter"/>
</dbReference>
<dbReference type="GO" id="GO:2001059">
    <property type="term" value="P:D-tagatose 6-phosphate catabolic process"/>
    <property type="evidence" value="ECO:0007669"/>
    <property type="project" value="UniProtKB-UniRule"/>
</dbReference>
<dbReference type="GO" id="GO:0019512">
    <property type="term" value="P:lactose catabolic process via tagatose-6-phosphate"/>
    <property type="evidence" value="ECO:0007669"/>
    <property type="project" value="InterPro"/>
</dbReference>
<dbReference type="Gene3D" id="3.20.20.70">
    <property type="entry name" value="Aldolase class I"/>
    <property type="match status" value="1"/>
</dbReference>
<dbReference type="HAMAP" id="MF_00734">
    <property type="entry name" value="LacD"/>
    <property type="match status" value="1"/>
</dbReference>
<dbReference type="InterPro" id="IPR013785">
    <property type="entry name" value="Aldolase_TIM"/>
</dbReference>
<dbReference type="InterPro" id="IPR002915">
    <property type="entry name" value="DeoC/FbaB/LacD_aldolase"/>
</dbReference>
<dbReference type="InterPro" id="IPR050552">
    <property type="entry name" value="LacD_aldolase"/>
</dbReference>
<dbReference type="InterPro" id="IPR005927">
    <property type="entry name" value="Tag_1.6-dipho_adolase"/>
</dbReference>
<dbReference type="NCBIfam" id="TIGR01232">
    <property type="entry name" value="lacD"/>
    <property type="match status" value="1"/>
</dbReference>
<dbReference type="NCBIfam" id="NF003180">
    <property type="entry name" value="PRK04161.1"/>
    <property type="match status" value="1"/>
</dbReference>
<dbReference type="NCBIfam" id="NF009065">
    <property type="entry name" value="PRK12399.1"/>
    <property type="match status" value="1"/>
</dbReference>
<dbReference type="NCBIfam" id="NF009498">
    <property type="entry name" value="PRK12858.1"/>
    <property type="match status" value="1"/>
</dbReference>
<dbReference type="PANTHER" id="PTHR39340">
    <property type="entry name" value="SULFOFRUCTOSEPHOSPHATE ALDOLASE"/>
    <property type="match status" value="1"/>
</dbReference>
<dbReference type="PANTHER" id="PTHR39340:SF1">
    <property type="entry name" value="SULFOFRUCTOSEPHOSPHATE ALDOLASE"/>
    <property type="match status" value="1"/>
</dbReference>
<dbReference type="Pfam" id="PF01791">
    <property type="entry name" value="DeoC"/>
    <property type="match status" value="1"/>
</dbReference>
<dbReference type="SMART" id="SM01133">
    <property type="entry name" value="DeoC"/>
    <property type="match status" value="1"/>
</dbReference>
<dbReference type="SUPFAM" id="SSF51569">
    <property type="entry name" value="Aldolase"/>
    <property type="match status" value="1"/>
</dbReference>